<dbReference type="EMBL" id="CP001127">
    <property type="protein sequence ID" value="ACF89376.1"/>
    <property type="status" value="ALT_INIT"/>
    <property type="molecule type" value="Genomic_DNA"/>
</dbReference>
<dbReference type="RefSeq" id="WP_000382923.1">
    <property type="nucleotide sequence ID" value="NC_011094.1"/>
</dbReference>
<dbReference type="SMR" id="B4TWJ1"/>
<dbReference type="KEGG" id="sew:SeSA_A3533"/>
<dbReference type="HOGENOM" id="CLU_017584_9_1_6"/>
<dbReference type="Proteomes" id="UP000001865">
    <property type="component" value="Chromosome"/>
</dbReference>
<dbReference type="GO" id="GO:0003677">
    <property type="term" value="F:DNA binding"/>
    <property type="evidence" value="ECO:0007669"/>
    <property type="project" value="UniProtKB-KW"/>
</dbReference>
<dbReference type="GO" id="GO:0003700">
    <property type="term" value="F:DNA-binding transcription factor activity"/>
    <property type="evidence" value="ECO:0007669"/>
    <property type="project" value="UniProtKB-UniRule"/>
</dbReference>
<dbReference type="GO" id="GO:0045892">
    <property type="term" value="P:negative regulation of DNA-templated transcription"/>
    <property type="evidence" value="ECO:0007669"/>
    <property type="project" value="UniProtKB-UniRule"/>
</dbReference>
<dbReference type="CDD" id="cd07377">
    <property type="entry name" value="WHTH_GntR"/>
    <property type="match status" value="1"/>
</dbReference>
<dbReference type="FunFam" id="1.10.10.10:FF:000150">
    <property type="entry name" value="HTH-type transcriptional repressor NanR"/>
    <property type="match status" value="1"/>
</dbReference>
<dbReference type="Gene3D" id="1.20.120.530">
    <property type="entry name" value="GntR ligand-binding domain-like"/>
    <property type="match status" value="1"/>
</dbReference>
<dbReference type="Gene3D" id="1.10.10.10">
    <property type="entry name" value="Winged helix-like DNA-binding domain superfamily/Winged helix DNA-binding domain"/>
    <property type="match status" value="1"/>
</dbReference>
<dbReference type="HAMAP" id="MF_01236">
    <property type="entry name" value="HTH_NanR"/>
    <property type="match status" value="1"/>
</dbReference>
<dbReference type="InterPro" id="IPR011711">
    <property type="entry name" value="GntR_C"/>
</dbReference>
<dbReference type="InterPro" id="IPR008920">
    <property type="entry name" value="TF_FadR/GntR_C"/>
</dbReference>
<dbReference type="InterPro" id="IPR000524">
    <property type="entry name" value="Tscrpt_reg_HTH_GntR"/>
</dbReference>
<dbReference type="InterPro" id="IPR023730">
    <property type="entry name" value="Tscrpt_reg_NanR"/>
</dbReference>
<dbReference type="InterPro" id="IPR036388">
    <property type="entry name" value="WH-like_DNA-bd_sf"/>
</dbReference>
<dbReference type="InterPro" id="IPR036390">
    <property type="entry name" value="WH_DNA-bd_sf"/>
</dbReference>
<dbReference type="NCBIfam" id="NF003011">
    <property type="entry name" value="PRK03837.1"/>
    <property type="match status" value="1"/>
</dbReference>
<dbReference type="PANTHER" id="PTHR43537:SF53">
    <property type="entry name" value="HTH-TYPE TRANSCRIPTIONAL REPRESSOR NANR"/>
    <property type="match status" value="1"/>
</dbReference>
<dbReference type="PANTHER" id="PTHR43537">
    <property type="entry name" value="TRANSCRIPTIONAL REGULATOR, GNTR FAMILY"/>
    <property type="match status" value="1"/>
</dbReference>
<dbReference type="Pfam" id="PF07729">
    <property type="entry name" value="FCD"/>
    <property type="match status" value="1"/>
</dbReference>
<dbReference type="Pfam" id="PF00392">
    <property type="entry name" value="GntR"/>
    <property type="match status" value="1"/>
</dbReference>
<dbReference type="PRINTS" id="PR00035">
    <property type="entry name" value="HTHGNTR"/>
</dbReference>
<dbReference type="SMART" id="SM00895">
    <property type="entry name" value="FCD"/>
    <property type="match status" value="1"/>
</dbReference>
<dbReference type="SMART" id="SM00345">
    <property type="entry name" value="HTH_GNTR"/>
    <property type="match status" value="1"/>
</dbReference>
<dbReference type="SUPFAM" id="SSF48008">
    <property type="entry name" value="GntR ligand-binding domain-like"/>
    <property type="match status" value="1"/>
</dbReference>
<dbReference type="SUPFAM" id="SSF46785">
    <property type="entry name" value="Winged helix' DNA-binding domain"/>
    <property type="match status" value="1"/>
</dbReference>
<dbReference type="PROSITE" id="PS50949">
    <property type="entry name" value="HTH_GNTR"/>
    <property type="match status" value="1"/>
</dbReference>
<accession>B4TWJ1</accession>
<proteinExistence type="inferred from homology"/>
<evidence type="ECO:0000255" key="1">
    <source>
        <dbReference type="HAMAP-Rule" id="MF_01236"/>
    </source>
</evidence>
<evidence type="ECO:0000256" key="2">
    <source>
        <dbReference type="SAM" id="MobiDB-lite"/>
    </source>
</evidence>
<evidence type="ECO:0000305" key="3"/>
<reference key="1">
    <citation type="journal article" date="2011" name="J. Bacteriol.">
        <title>Comparative genomics of 28 Salmonella enterica isolates: evidence for CRISPR-mediated adaptive sublineage evolution.</title>
        <authorList>
            <person name="Fricke W.F."/>
            <person name="Mammel M.K."/>
            <person name="McDermott P.F."/>
            <person name="Tartera C."/>
            <person name="White D.G."/>
            <person name="Leclerc J.E."/>
            <person name="Ravel J."/>
            <person name="Cebula T.A."/>
        </authorList>
    </citation>
    <scope>NUCLEOTIDE SEQUENCE [LARGE SCALE GENOMIC DNA]</scope>
    <source>
        <strain>CVM19633</strain>
    </source>
</reference>
<feature type="chain" id="PRO_0000415303" description="HTH-type transcriptional repressor NanR">
    <location>
        <begin position="1"/>
        <end position="263"/>
    </location>
</feature>
<feature type="domain" description="HTH gntR-type" evidence="1">
    <location>
        <begin position="30"/>
        <end position="98"/>
    </location>
</feature>
<feature type="DNA-binding region" description="H-T-H motif" evidence="1">
    <location>
        <begin position="58"/>
        <end position="77"/>
    </location>
</feature>
<feature type="region of interest" description="Disordered" evidence="2">
    <location>
        <begin position="1"/>
        <end position="25"/>
    </location>
</feature>
<gene>
    <name evidence="1" type="primary">nanR</name>
    <name type="ordered locus">SeSA_A3533</name>
</gene>
<keyword id="KW-0238">DNA-binding</keyword>
<keyword id="KW-0678">Repressor</keyword>
<keyword id="KW-0804">Transcription</keyword>
<keyword id="KW-0805">Transcription regulation</keyword>
<protein>
    <recommendedName>
        <fullName evidence="1">HTH-type transcriptional repressor NanR</fullName>
    </recommendedName>
</protein>
<comment type="function">
    <text evidence="1">Transcriptional repressor that controls expression of the genes required for the catabolism of sialic acids.</text>
</comment>
<comment type="similarity">
    <text evidence="1">Belongs to the NanR family.</text>
</comment>
<comment type="sequence caution" evidence="3">
    <conflict type="erroneous initiation">
        <sequence resource="EMBL-CDS" id="ACF89376"/>
    </conflict>
    <text>Truncated N-terminus.</text>
</comment>
<name>NANR_SALSV</name>
<organism>
    <name type="scientific">Salmonella schwarzengrund (strain CVM19633)</name>
    <dbReference type="NCBI Taxonomy" id="439843"/>
    <lineage>
        <taxon>Bacteria</taxon>
        <taxon>Pseudomonadati</taxon>
        <taxon>Pseudomonadota</taxon>
        <taxon>Gammaproteobacteria</taxon>
        <taxon>Enterobacterales</taxon>
        <taxon>Enterobacteriaceae</taxon>
        <taxon>Salmonella</taxon>
    </lineage>
</organism>
<sequence>MDVMNAFDSQAEDSPTSLGRSLRRRPLARKKLSEMVEEELEQMIRRHEFGEGEQLPSERELMAFFNVGRPSVREALAALKRKGLVQINNGERARVSRPSADTIISELSGMAKDFLTHPGGIAHFEQLRLFFESSLVRYAAEHATDEQIALLTKALEINSQSLDDNALFIRSDVEFHRVLAEIPGNPIFMAIHVALLDWLIAARPSVPDRELHEHNNLSYQQHIVIVDAIRQRDPDKADRALQTHLNSVSATWHALGKKSQKMR</sequence>